<feature type="chain" id="PRO_0000087243" description="Fimbrial assembly protein, serogroup A1">
    <location>
        <begin position="1"/>
        <end position="48" status="greater than"/>
    </location>
</feature>
<feature type="non-terminal residue">
    <location>
        <position position="48"/>
    </location>
</feature>
<gene>
    <name type="primary">fimB</name>
</gene>
<dbReference type="EMBL" id="X52403">
    <property type="protein sequence ID" value="CAA36649.1"/>
    <property type="molecule type" value="Genomic_DNA"/>
</dbReference>
<dbReference type="PIR" id="S15246">
    <property type="entry name" value="S15246"/>
</dbReference>
<dbReference type="SMR" id="P17828"/>
<name>FIMBA_DICNO</name>
<proteinExistence type="predicted"/>
<keyword id="KW-1029">Fimbrium biogenesis</keyword>
<organism>
    <name type="scientific">Dichelobacter nodosus</name>
    <name type="common">Bacteroides nodosus</name>
    <dbReference type="NCBI Taxonomy" id="870"/>
    <lineage>
        <taxon>Bacteria</taxon>
        <taxon>Pseudomonadati</taxon>
        <taxon>Pseudomonadota</taxon>
        <taxon>Gammaproteobacteria</taxon>
        <taxon>Cardiobacteriales</taxon>
        <taxon>Cardiobacteriaceae</taxon>
        <taxon>Dichelobacter</taxon>
    </lineage>
</organism>
<reference key="1">
    <citation type="journal article" date="1991" name="Mol. Microbiol.">
        <title>Organization of the fimbrial gene region of Bacteroides nodosus: class I and class II strains.</title>
        <authorList>
            <person name="Hobbs M."/>
            <person name="Dalrymple B.P."/>
            <person name="Cox P.T."/>
            <person name="Livingstone S.P."/>
            <person name="Delaney S.F."/>
            <person name="Mattick J.S."/>
        </authorList>
    </citation>
    <scope>NUCLEOTIDE SEQUENCE [GENOMIC DNA]</scope>
    <source>
        <strain>Serogroup A1 isolate VCS1001</strain>
    </source>
</reference>
<accession>P17828</accession>
<protein>
    <recommendedName>
        <fullName>Fimbrial assembly protein, serogroup A1</fullName>
    </recommendedName>
</protein>
<sequence>MNKQRFLFAAKISGIHFLLSLVVALALAGLIFFVWYPFPYQKIMGSFK</sequence>